<evidence type="ECO:0000255" key="1">
    <source>
        <dbReference type="HAMAP-Rule" id="MF_01317"/>
    </source>
</evidence>
<proteinExistence type="inferred from homology"/>
<comment type="function">
    <text evidence="1">One of the components of the core complex of photosystem II (PSII). PSII is a light-driven water:plastoquinone oxidoreductase that uses light energy to abstract electrons from H(2)O, generating O(2) and a proton gradient subsequently used for ATP formation. It consists of a core antenna complex that captures photons, and an electron transfer chain that converts photonic excitation into a charge separation. This subunit is found at the monomer-monomer interface and is required for correct PSII assembly and/or dimerization.</text>
</comment>
<comment type="subunit">
    <text evidence="1">PSII is composed of 1 copy each of membrane proteins PsbA, PsbB, PsbC, PsbD, PsbE, PsbF, PsbH, PsbI, PsbJ, PsbK, PsbL, PsbM, PsbT, PsbX, PsbY, PsbZ, Psb30/Ycf12, at least 3 peripheral proteins of the oxygen-evolving complex and a large number of cofactors. It forms dimeric complexes.</text>
</comment>
<comment type="subcellular location">
    <subcellularLocation>
        <location evidence="1">Plastid</location>
        <location evidence="1">Chloroplast thylakoid membrane</location>
        <topology evidence="1">Single-pass membrane protein</topology>
    </subcellularLocation>
</comment>
<comment type="similarity">
    <text evidence="1">Belongs to the PsbL family.</text>
</comment>
<protein>
    <recommendedName>
        <fullName evidence="1">Photosystem II reaction center protein L</fullName>
        <shortName evidence="1">PSII-L</shortName>
    </recommendedName>
</protein>
<keyword id="KW-0150">Chloroplast</keyword>
<keyword id="KW-0472">Membrane</keyword>
<keyword id="KW-0602">Photosynthesis</keyword>
<keyword id="KW-0604">Photosystem II</keyword>
<keyword id="KW-0934">Plastid</keyword>
<keyword id="KW-0674">Reaction center</keyword>
<keyword id="KW-1185">Reference proteome</keyword>
<keyword id="KW-0793">Thylakoid</keyword>
<keyword id="KW-0812">Transmembrane</keyword>
<keyword id="KW-1133">Transmembrane helix</keyword>
<geneLocation type="chloroplast"/>
<sequence>MTQSNPNEQNVELNRTSLYWGLLLIFVLAVLFSNYFFN</sequence>
<gene>
    <name evidence="1" type="primary">psbL</name>
</gene>
<feature type="chain" id="PRO_0000276203" description="Photosystem II reaction center protein L">
    <location>
        <begin position="1"/>
        <end position="38"/>
    </location>
</feature>
<feature type="transmembrane region" description="Helical" evidence="1">
    <location>
        <begin position="17"/>
        <end position="37"/>
    </location>
</feature>
<organism>
    <name type="scientific">Coffea arabica</name>
    <name type="common">Arabian coffee</name>
    <dbReference type="NCBI Taxonomy" id="13443"/>
    <lineage>
        <taxon>Eukaryota</taxon>
        <taxon>Viridiplantae</taxon>
        <taxon>Streptophyta</taxon>
        <taxon>Embryophyta</taxon>
        <taxon>Tracheophyta</taxon>
        <taxon>Spermatophyta</taxon>
        <taxon>Magnoliopsida</taxon>
        <taxon>eudicotyledons</taxon>
        <taxon>Gunneridae</taxon>
        <taxon>Pentapetalae</taxon>
        <taxon>asterids</taxon>
        <taxon>lamiids</taxon>
        <taxon>Gentianales</taxon>
        <taxon>Rubiaceae</taxon>
        <taxon>Ixoroideae</taxon>
        <taxon>Gardenieae complex</taxon>
        <taxon>Bertiereae - Coffeeae clade</taxon>
        <taxon>Coffeeae</taxon>
        <taxon>Coffea</taxon>
    </lineage>
</organism>
<accession>A0A350</accession>
<dbReference type="EMBL" id="EF044213">
    <property type="protein sequence ID" value="ABJ89694.1"/>
    <property type="molecule type" value="Genomic_DNA"/>
</dbReference>
<dbReference type="RefSeq" id="YP_817497.1">
    <property type="nucleotide sequence ID" value="NC_008535.1"/>
</dbReference>
<dbReference type="SMR" id="A0A350"/>
<dbReference type="GeneID" id="4421778"/>
<dbReference type="OrthoDB" id="99at2759"/>
<dbReference type="Proteomes" id="UP000515148">
    <property type="component" value="Chloroplast Pltd"/>
</dbReference>
<dbReference type="GO" id="GO:0009535">
    <property type="term" value="C:chloroplast thylakoid membrane"/>
    <property type="evidence" value="ECO:0007669"/>
    <property type="project" value="UniProtKB-SubCell"/>
</dbReference>
<dbReference type="GO" id="GO:0009539">
    <property type="term" value="C:photosystem II reaction center"/>
    <property type="evidence" value="ECO:0007669"/>
    <property type="project" value="InterPro"/>
</dbReference>
<dbReference type="GO" id="GO:0015979">
    <property type="term" value="P:photosynthesis"/>
    <property type="evidence" value="ECO:0007669"/>
    <property type="project" value="UniProtKB-UniRule"/>
</dbReference>
<dbReference type="HAMAP" id="MF_01317">
    <property type="entry name" value="PSII_PsbL"/>
    <property type="match status" value="1"/>
</dbReference>
<dbReference type="InterPro" id="IPR003372">
    <property type="entry name" value="PSII_PsbL"/>
</dbReference>
<dbReference type="InterPro" id="IPR037266">
    <property type="entry name" value="PSII_PsbL_sf"/>
</dbReference>
<dbReference type="NCBIfam" id="NF001972">
    <property type="entry name" value="PRK00753.1"/>
    <property type="match status" value="1"/>
</dbReference>
<dbReference type="Pfam" id="PF02419">
    <property type="entry name" value="PsbL"/>
    <property type="match status" value="1"/>
</dbReference>
<dbReference type="SUPFAM" id="SSF161017">
    <property type="entry name" value="Photosystem II reaction center protein L, PsbL"/>
    <property type="match status" value="1"/>
</dbReference>
<name>PSBL_COFAR</name>
<reference key="1">
    <citation type="journal article" date="2007" name="Plant Biotechnol. J.">
        <title>The complete nucleotide sequence of the coffee (Coffea arabica L.) chloroplast genome: organization and implications for biotechnology and phylogenetic relationships amongst angiosperms.</title>
        <authorList>
            <person name="Samson N."/>
            <person name="Bausher M.G."/>
            <person name="Lee S.-B."/>
            <person name="Jansen R.K."/>
            <person name="Daniell H."/>
        </authorList>
    </citation>
    <scope>NUCLEOTIDE SEQUENCE [LARGE SCALE GENOMIC DNA]</scope>
</reference>